<accession>Q8HXH0</accession>
<keyword id="KW-0479">Metal-binding</keyword>
<keyword id="KW-1185">Reference proteome</keyword>
<keyword id="KW-0677">Repeat</keyword>
<keyword id="KW-0802">TPR repeat</keyword>
<keyword id="KW-0862">Zinc</keyword>
<keyword id="KW-0863">Zinc-finger</keyword>
<feature type="chain" id="PRO_0000277672" description="LON peptidase N-terminal domain and RING finger protein 3">
    <location>
        <begin position="1"/>
        <end position="718"/>
    </location>
</feature>
<feature type="repeat" description="TPR 1">
    <location>
        <begin position="67"/>
        <end position="100"/>
    </location>
</feature>
<feature type="repeat" description="TPR 2">
    <location>
        <begin position="243"/>
        <end position="276"/>
    </location>
</feature>
<feature type="repeat" description="TPR 3">
    <location>
        <begin position="278"/>
        <end position="310"/>
    </location>
</feature>
<feature type="domain" description="Lon N-terminal" evidence="2">
    <location>
        <begin position="505"/>
        <end position="714"/>
    </location>
</feature>
<feature type="zinc finger region" description="RING-type 1" evidence="1">
    <location>
        <begin position="158"/>
        <end position="196"/>
    </location>
</feature>
<feature type="zinc finger region" description="RING-type 2" evidence="1">
    <location>
        <begin position="426"/>
        <end position="464"/>
    </location>
</feature>
<feature type="region of interest" description="Disordered" evidence="3">
    <location>
        <begin position="1"/>
        <end position="69"/>
    </location>
</feature>
<feature type="region of interest" description="Disordered" evidence="3">
    <location>
        <begin position="322"/>
        <end position="413"/>
    </location>
</feature>
<feature type="compositionally biased region" description="Polar residues" evidence="3">
    <location>
        <begin position="57"/>
        <end position="66"/>
    </location>
</feature>
<feature type="compositionally biased region" description="Basic and acidic residues" evidence="3">
    <location>
        <begin position="339"/>
        <end position="352"/>
    </location>
</feature>
<organism>
    <name type="scientific">Macaca fascicularis</name>
    <name type="common">Crab-eating macaque</name>
    <name type="synonym">Cynomolgus monkey</name>
    <dbReference type="NCBI Taxonomy" id="9541"/>
    <lineage>
        <taxon>Eukaryota</taxon>
        <taxon>Metazoa</taxon>
        <taxon>Chordata</taxon>
        <taxon>Craniata</taxon>
        <taxon>Vertebrata</taxon>
        <taxon>Euteleostomi</taxon>
        <taxon>Mammalia</taxon>
        <taxon>Eutheria</taxon>
        <taxon>Euarchontoglires</taxon>
        <taxon>Primates</taxon>
        <taxon>Haplorrhini</taxon>
        <taxon>Catarrhini</taxon>
        <taxon>Cercopithecidae</taxon>
        <taxon>Cercopithecinae</taxon>
        <taxon>Macaca</taxon>
    </lineage>
</organism>
<reference key="1">
    <citation type="submission" date="2002-12" db="EMBL/GenBank/DDBJ databases">
        <title>Isolation of full-length cDNA clones from macaque brain cDNA libraries.</title>
        <authorList>
            <person name="Osada N."/>
            <person name="Hida M."/>
            <person name="Kusuda J."/>
            <person name="Tanuma R."/>
            <person name="Iseki K."/>
            <person name="Hirai M."/>
            <person name="Terao K."/>
            <person name="Suzuki Y."/>
            <person name="Sugano S."/>
            <person name="Hashimoto K."/>
        </authorList>
    </citation>
    <scope>NUCLEOTIDE SEQUENCE [LARGE SCALE MRNA]</scope>
    <source>
        <tissue>Medulla oblongata</tissue>
    </source>
</reference>
<proteinExistence type="evidence at transcript level"/>
<protein>
    <recommendedName>
        <fullName>LON peptidase N-terminal domain and RING finger protein 3</fullName>
    </recommendedName>
</protein>
<gene>
    <name type="primary">LONRF3</name>
    <name type="ORF">QmoA-15092</name>
</gene>
<sequence length="718" mass="79790">MESLRTEQMLSLPAEVSSNNLEPAERGASAAQVDMGPHREAAAESPAPLPTREPEQEQSPGTSTPESKVLLTQADALASRGRIREALEVYRQLSERQQLVAEQLEQLVRCLAEKVPQGEALAPAPPGEGSTASGAVAAEETGAAAAAAATEVWDGFKCRKCHGFLSDPVSLSCGHTFCKLCLERGRAADRRCALCGVKLSALMVATGRARGSRRAGQQPPPPLRVNVVLSGLLGKLFPGPARASQLRHEGNRLYRERQVEAALLKYNEAVKLAPNDHLLYSNRSQIYFTLESHENALHDAEIACKLRPMGFKDNLELPHCSSQEEAAARGDGSSLMDPAKVKGDGQQHHMKDQEEEEEKWDATSPKAASSKTGKCQEKKRKHCQIESQEDTGMPNKASKQDPPTDQGDKPALSLPLASFDASDLECALCMRLFYEPVTTPCGHTFCLKCLERCLDHNAKCPLCKDGLSQCLASRKYSKNVIMEELIAKFLPEELKERRKLYEEEMEELSNLNKNVPIFVCTMAYPTVPCPLHIFEPCYRLMIRRCIETGTRQFGMCLGDPVKGFAEYGCILEIRNVQFFADGRSVVDSIGKRRFRVLHQSQRDGYNTADIEYIEDQKVQGEDCAELMGLHNCVYQQASLWFHSLKSSLKNRILNHFGPMPEKDADPQMNPNGPAWCWWMLAVLPLESRAQLPFLAMRSLKDRLNGIRRVLAFISRNQN</sequence>
<dbReference type="EMBL" id="AB097555">
    <property type="protein sequence ID" value="BAC41780.1"/>
    <property type="molecule type" value="mRNA"/>
</dbReference>
<dbReference type="RefSeq" id="XP_005594504.1">
    <property type="nucleotide sequence ID" value="XM_005594447.4"/>
</dbReference>
<dbReference type="SMR" id="Q8HXH0"/>
<dbReference type="STRING" id="9541.ENSMFAP00000022697"/>
<dbReference type="GeneID" id="102135813"/>
<dbReference type="KEGG" id="mcf:102135813"/>
<dbReference type="CTD" id="79836"/>
<dbReference type="VEuPathDB" id="HostDB:ENSMFAG00000043034"/>
<dbReference type="eggNOG" id="KOG1124">
    <property type="taxonomic scope" value="Eukaryota"/>
</dbReference>
<dbReference type="eggNOG" id="KOG4159">
    <property type="taxonomic scope" value="Eukaryota"/>
</dbReference>
<dbReference type="Proteomes" id="UP000233100">
    <property type="component" value="Chromosome X"/>
</dbReference>
<dbReference type="GO" id="GO:0005737">
    <property type="term" value="C:cytoplasm"/>
    <property type="evidence" value="ECO:0007669"/>
    <property type="project" value="UniProtKB-ARBA"/>
</dbReference>
<dbReference type="GO" id="GO:0061630">
    <property type="term" value="F:ubiquitin protein ligase activity"/>
    <property type="evidence" value="ECO:0007669"/>
    <property type="project" value="TreeGrafter"/>
</dbReference>
<dbReference type="GO" id="GO:0008270">
    <property type="term" value="F:zinc ion binding"/>
    <property type="evidence" value="ECO:0007669"/>
    <property type="project" value="UniProtKB-KW"/>
</dbReference>
<dbReference type="CDD" id="cd16513">
    <property type="entry name" value="RING-HC_LONFs_rpt1"/>
    <property type="match status" value="1"/>
</dbReference>
<dbReference type="CDD" id="cd16514">
    <property type="entry name" value="RING-HC_LONFs_rpt2"/>
    <property type="match status" value="1"/>
</dbReference>
<dbReference type="Gene3D" id="2.30.130.40">
    <property type="entry name" value="LON domain-like"/>
    <property type="match status" value="1"/>
</dbReference>
<dbReference type="Gene3D" id="1.25.40.10">
    <property type="entry name" value="Tetratricopeptide repeat domain"/>
    <property type="match status" value="1"/>
</dbReference>
<dbReference type="Gene3D" id="3.30.40.10">
    <property type="entry name" value="Zinc/RING finger domain, C3HC4 (zinc finger)"/>
    <property type="match status" value="2"/>
</dbReference>
<dbReference type="InterPro" id="IPR003111">
    <property type="entry name" value="Lon_prtase_N"/>
</dbReference>
<dbReference type="InterPro" id="IPR046336">
    <property type="entry name" value="Lon_prtase_N_sf"/>
</dbReference>
<dbReference type="InterPro" id="IPR015947">
    <property type="entry name" value="PUA-like_sf"/>
</dbReference>
<dbReference type="InterPro" id="IPR011990">
    <property type="entry name" value="TPR-like_helical_dom_sf"/>
</dbReference>
<dbReference type="InterPro" id="IPR019734">
    <property type="entry name" value="TPR_rpt"/>
</dbReference>
<dbReference type="InterPro" id="IPR018957">
    <property type="entry name" value="Znf_C3HC4_RING-type"/>
</dbReference>
<dbReference type="InterPro" id="IPR001841">
    <property type="entry name" value="Znf_RING"/>
</dbReference>
<dbReference type="InterPro" id="IPR013083">
    <property type="entry name" value="Znf_RING/FYVE/PHD"/>
</dbReference>
<dbReference type="InterPro" id="IPR017907">
    <property type="entry name" value="Znf_RING_CS"/>
</dbReference>
<dbReference type="PANTHER" id="PTHR23327:SF41">
    <property type="entry name" value="LON PEPTIDASE N-TERMINAL DOMAIN AND RING FINGER PROTEIN 3"/>
    <property type="match status" value="1"/>
</dbReference>
<dbReference type="PANTHER" id="PTHR23327">
    <property type="entry name" value="RING FINGER PROTEIN 127"/>
    <property type="match status" value="1"/>
</dbReference>
<dbReference type="Pfam" id="PF02190">
    <property type="entry name" value="LON_substr_bdg"/>
    <property type="match status" value="1"/>
</dbReference>
<dbReference type="Pfam" id="PF00097">
    <property type="entry name" value="zf-C3HC4"/>
    <property type="match status" value="1"/>
</dbReference>
<dbReference type="Pfam" id="PF13923">
    <property type="entry name" value="zf-C3HC4_2"/>
    <property type="match status" value="1"/>
</dbReference>
<dbReference type="SMART" id="SM00464">
    <property type="entry name" value="LON"/>
    <property type="match status" value="1"/>
</dbReference>
<dbReference type="SMART" id="SM00184">
    <property type="entry name" value="RING"/>
    <property type="match status" value="2"/>
</dbReference>
<dbReference type="SMART" id="SM00028">
    <property type="entry name" value="TPR"/>
    <property type="match status" value="3"/>
</dbReference>
<dbReference type="SUPFAM" id="SSF88697">
    <property type="entry name" value="PUA domain-like"/>
    <property type="match status" value="1"/>
</dbReference>
<dbReference type="SUPFAM" id="SSF57850">
    <property type="entry name" value="RING/U-box"/>
    <property type="match status" value="2"/>
</dbReference>
<dbReference type="SUPFAM" id="SSF48452">
    <property type="entry name" value="TPR-like"/>
    <property type="match status" value="1"/>
</dbReference>
<dbReference type="PROSITE" id="PS51787">
    <property type="entry name" value="LON_N"/>
    <property type="match status" value="1"/>
</dbReference>
<dbReference type="PROSITE" id="PS50005">
    <property type="entry name" value="TPR"/>
    <property type="match status" value="2"/>
</dbReference>
<dbReference type="PROSITE" id="PS50293">
    <property type="entry name" value="TPR_REGION"/>
    <property type="match status" value="1"/>
</dbReference>
<dbReference type="PROSITE" id="PS00518">
    <property type="entry name" value="ZF_RING_1"/>
    <property type="match status" value="2"/>
</dbReference>
<dbReference type="PROSITE" id="PS50089">
    <property type="entry name" value="ZF_RING_2"/>
    <property type="match status" value="2"/>
</dbReference>
<evidence type="ECO:0000255" key="1">
    <source>
        <dbReference type="PROSITE-ProRule" id="PRU00175"/>
    </source>
</evidence>
<evidence type="ECO:0000255" key="2">
    <source>
        <dbReference type="PROSITE-ProRule" id="PRU01123"/>
    </source>
</evidence>
<evidence type="ECO:0000256" key="3">
    <source>
        <dbReference type="SAM" id="MobiDB-lite"/>
    </source>
</evidence>
<name>LONF3_MACFA</name>